<accession>Q07VB6</accession>
<gene>
    <name evidence="1" type="primary">ubiG</name>
    <name type="ordered locus">RPE_0157</name>
</gene>
<sequence>MAMQSETPGNPASTVDPAEIAKFSKLSAEWWDPTGRMAPLHKINPHRVAFIRDAACRKFDRNPKSLNSLAGLRMIDIGCGAGLLCEPFTRLGAQVIGIDPSATNIAAAKVHAEKSRLLIDYRNTTAEAMDPRERFDIVLAMEVIEHVTDVGAFLGRCAAMMKPTGLMVVATLNRNWKSFALAIVGAEYVMRWLPRGTHQWDKFVTPEELTRHLQNSRLAVTEQAGLVYNPLADKWNLSADMDVNYMMVAESAG</sequence>
<evidence type="ECO:0000255" key="1">
    <source>
        <dbReference type="HAMAP-Rule" id="MF_00472"/>
    </source>
</evidence>
<name>UBIG_RHOP5</name>
<reference key="1">
    <citation type="submission" date="2006-09" db="EMBL/GenBank/DDBJ databases">
        <title>Complete sequence of Rhodopseudomonas palustris BisA53.</title>
        <authorList>
            <consortium name="US DOE Joint Genome Institute"/>
            <person name="Copeland A."/>
            <person name="Lucas S."/>
            <person name="Lapidus A."/>
            <person name="Barry K."/>
            <person name="Detter J.C."/>
            <person name="Glavina del Rio T."/>
            <person name="Hammon N."/>
            <person name="Israni S."/>
            <person name="Dalin E."/>
            <person name="Tice H."/>
            <person name="Pitluck S."/>
            <person name="Chain P."/>
            <person name="Malfatti S."/>
            <person name="Shin M."/>
            <person name="Vergez L."/>
            <person name="Schmutz J."/>
            <person name="Larimer F."/>
            <person name="Land M."/>
            <person name="Hauser L."/>
            <person name="Pelletier D.A."/>
            <person name="Kyrpides N."/>
            <person name="Kim E."/>
            <person name="Harwood C.S."/>
            <person name="Oda Y."/>
            <person name="Richardson P."/>
        </authorList>
    </citation>
    <scope>NUCLEOTIDE SEQUENCE [LARGE SCALE GENOMIC DNA]</scope>
    <source>
        <strain>BisA53</strain>
    </source>
</reference>
<protein>
    <recommendedName>
        <fullName evidence="1">Ubiquinone biosynthesis O-methyltransferase</fullName>
    </recommendedName>
    <alternativeName>
        <fullName evidence="1">2-polyprenyl-6-hydroxyphenol methylase</fullName>
        <ecNumber evidence="1">2.1.1.222</ecNumber>
    </alternativeName>
    <alternativeName>
        <fullName evidence="1">3-demethylubiquinone 3-O-methyltransferase</fullName>
        <ecNumber evidence="1">2.1.1.64</ecNumber>
    </alternativeName>
</protein>
<comment type="function">
    <text evidence="1">O-methyltransferase that catalyzes the 2 O-methylation steps in the ubiquinone biosynthetic pathway.</text>
</comment>
<comment type="catalytic activity">
    <reaction evidence="1">
        <text>a 3-demethylubiquinol + S-adenosyl-L-methionine = a ubiquinol + S-adenosyl-L-homocysteine + H(+)</text>
        <dbReference type="Rhea" id="RHEA:44380"/>
        <dbReference type="Rhea" id="RHEA-COMP:9566"/>
        <dbReference type="Rhea" id="RHEA-COMP:10914"/>
        <dbReference type="ChEBI" id="CHEBI:15378"/>
        <dbReference type="ChEBI" id="CHEBI:17976"/>
        <dbReference type="ChEBI" id="CHEBI:57856"/>
        <dbReference type="ChEBI" id="CHEBI:59789"/>
        <dbReference type="ChEBI" id="CHEBI:84422"/>
        <dbReference type="EC" id="2.1.1.64"/>
    </reaction>
</comment>
<comment type="catalytic activity">
    <reaction evidence="1">
        <text>a 3-(all-trans-polyprenyl)benzene-1,2-diol + S-adenosyl-L-methionine = a 2-methoxy-6-(all-trans-polyprenyl)phenol + S-adenosyl-L-homocysteine + H(+)</text>
        <dbReference type="Rhea" id="RHEA:31411"/>
        <dbReference type="Rhea" id="RHEA-COMP:9550"/>
        <dbReference type="Rhea" id="RHEA-COMP:9551"/>
        <dbReference type="ChEBI" id="CHEBI:15378"/>
        <dbReference type="ChEBI" id="CHEBI:57856"/>
        <dbReference type="ChEBI" id="CHEBI:59789"/>
        <dbReference type="ChEBI" id="CHEBI:62729"/>
        <dbReference type="ChEBI" id="CHEBI:62731"/>
        <dbReference type="EC" id="2.1.1.222"/>
    </reaction>
</comment>
<comment type="pathway">
    <text evidence="1">Cofactor biosynthesis; ubiquinone biosynthesis.</text>
</comment>
<comment type="similarity">
    <text evidence="1">Belongs to the methyltransferase superfamily. UbiG/COQ3 family.</text>
</comment>
<keyword id="KW-0489">Methyltransferase</keyword>
<keyword id="KW-0949">S-adenosyl-L-methionine</keyword>
<keyword id="KW-0808">Transferase</keyword>
<keyword id="KW-0831">Ubiquinone biosynthesis</keyword>
<organism>
    <name type="scientific">Rhodopseudomonas palustris (strain BisA53)</name>
    <dbReference type="NCBI Taxonomy" id="316055"/>
    <lineage>
        <taxon>Bacteria</taxon>
        <taxon>Pseudomonadati</taxon>
        <taxon>Pseudomonadota</taxon>
        <taxon>Alphaproteobacteria</taxon>
        <taxon>Hyphomicrobiales</taxon>
        <taxon>Nitrobacteraceae</taxon>
        <taxon>Rhodopseudomonas</taxon>
    </lineage>
</organism>
<feature type="chain" id="PRO_1000013912" description="Ubiquinone biosynthesis O-methyltransferase">
    <location>
        <begin position="1"/>
        <end position="253"/>
    </location>
</feature>
<feature type="binding site" evidence="1">
    <location>
        <position position="47"/>
    </location>
    <ligand>
        <name>S-adenosyl-L-methionine</name>
        <dbReference type="ChEBI" id="CHEBI:59789"/>
    </ligand>
</feature>
<feature type="binding site" evidence="1">
    <location>
        <position position="78"/>
    </location>
    <ligand>
        <name>S-adenosyl-L-methionine</name>
        <dbReference type="ChEBI" id="CHEBI:59789"/>
    </ligand>
</feature>
<feature type="binding site" evidence="1">
    <location>
        <position position="99"/>
    </location>
    <ligand>
        <name>S-adenosyl-L-methionine</name>
        <dbReference type="ChEBI" id="CHEBI:59789"/>
    </ligand>
</feature>
<feature type="binding site" evidence="1">
    <location>
        <position position="141"/>
    </location>
    <ligand>
        <name>S-adenosyl-L-methionine</name>
        <dbReference type="ChEBI" id="CHEBI:59789"/>
    </ligand>
</feature>
<proteinExistence type="inferred from homology"/>
<dbReference type="EC" id="2.1.1.222" evidence="1"/>
<dbReference type="EC" id="2.1.1.64" evidence="1"/>
<dbReference type="EMBL" id="CP000463">
    <property type="protein sequence ID" value="ABJ04118.1"/>
    <property type="molecule type" value="Genomic_DNA"/>
</dbReference>
<dbReference type="SMR" id="Q07VB6"/>
<dbReference type="STRING" id="316055.RPE_0157"/>
<dbReference type="KEGG" id="rpe:RPE_0157"/>
<dbReference type="eggNOG" id="COG2227">
    <property type="taxonomic scope" value="Bacteria"/>
</dbReference>
<dbReference type="HOGENOM" id="CLU_042432_0_0_5"/>
<dbReference type="OrthoDB" id="9801538at2"/>
<dbReference type="UniPathway" id="UPA00232"/>
<dbReference type="GO" id="GO:0102208">
    <property type="term" value="F:2-polyprenyl-6-hydroxyphenol methylase activity"/>
    <property type="evidence" value="ECO:0007669"/>
    <property type="project" value="UniProtKB-EC"/>
</dbReference>
<dbReference type="GO" id="GO:0061542">
    <property type="term" value="F:3-demethylubiquinol 3-O-methyltransferase activity"/>
    <property type="evidence" value="ECO:0007669"/>
    <property type="project" value="UniProtKB-UniRule"/>
</dbReference>
<dbReference type="GO" id="GO:0010420">
    <property type="term" value="F:polyprenyldihydroxybenzoate methyltransferase activity"/>
    <property type="evidence" value="ECO:0007669"/>
    <property type="project" value="InterPro"/>
</dbReference>
<dbReference type="GO" id="GO:0032259">
    <property type="term" value="P:methylation"/>
    <property type="evidence" value="ECO:0007669"/>
    <property type="project" value="UniProtKB-KW"/>
</dbReference>
<dbReference type="CDD" id="cd02440">
    <property type="entry name" value="AdoMet_MTases"/>
    <property type="match status" value="1"/>
</dbReference>
<dbReference type="Gene3D" id="3.40.50.150">
    <property type="entry name" value="Vaccinia Virus protein VP39"/>
    <property type="match status" value="1"/>
</dbReference>
<dbReference type="HAMAP" id="MF_00472">
    <property type="entry name" value="UbiG"/>
    <property type="match status" value="1"/>
</dbReference>
<dbReference type="InterPro" id="IPR029063">
    <property type="entry name" value="SAM-dependent_MTases_sf"/>
</dbReference>
<dbReference type="InterPro" id="IPR010233">
    <property type="entry name" value="UbiG_MeTrfase"/>
</dbReference>
<dbReference type="NCBIfam" id="TIGR01983">
    <property type="entry name" value="UbiG"/>
    <property type="match status" value="1"/>
</dbReference>
<dbReference type="PANTHER" id="PTHR43464">
    <property type="entry name" value="METHYLTRANSFERASE"/>
    <property type="match status" value="1"/>
</dbReference>
<dbReference type="PANTHER" id="PTHR43464:SF19">
    <property type="entry name" value="UBIQUINONE BIOSYNTHESIS O-METHYLTRANSFERASE, MITOCHONDRIAL"/>
    <property type="match status" value="1"/>
</dbReference>
<dbReference type="Pfam" id="PF13489">
    <property type="entry name" value="Methyltransf_23"/>
    <property type="match status" value="1"/>
</dbReference>
<dbReference type="SUPFAM" id="SSF53335">
    <property type="entry name" value="S-adenosyl-L-methionine-dependent methyltransferases"/>
    <property type="match status" value="1"/>
</dbReference>